<organism>
    <name type="scientific">Bacillus subtilis (strain 168)</name>
    <dbReference type="NCBI Taxonomy" id="224308"/>
    <lineage>
        <taxon>Bacteria</taxon>
        <taxon>Bacillati</taxon>
        <taxon>Bacillota</taxon>
        <taxon>Bacilli</taxon>
        <taxon>Bacillales</taxon>
        <taxon>Bacillaceae</taxon>
        <taxon>Bacillus</taxon>
    </lineage>
</organism>
<proteinExistence type="inferred from homology"/>
<gene>
    <name evidence="1" type="primary">rhaA</name>
    <name type="synonym">yulE</name>
    <name type="ordered locus">BSU31180</name>
</gene>
<name>RHAA_BACSU</name>
<protein>
    <recommendedName>
        <fullName evidence="1">L-rhamnose isomerase</fullName>
        <ecNumber evidence="1">5.3.1.14</ecNumber>
    </recommendedName>
</protein>
<evidence type="ECO:0000255" key="1">
    <source>
        <dbReference type="HAMAP-Rule" id="MF_00541"/>
    </source>
</evidence>
<keyword id="KW-0963">Cytoplasm</keyword>
<keyword id="KW-0413">Isomerase</keyword>
<keyword id="KW-0464">Manganese</keyword>
<keyword id="KW-0479">Metal-binding</keyword>
<keyword id="KW-1185">Reference proteome</keyword>
<keyword id="KW-0684">Rhamnose metabolism</keyword>
<sequence>MTIKANYDSAKQAYEKWGIDVEEALRQLEQVPISIHCWQGDDIEGFEVNKGELSGGIDVTGNYPGKAQTPEELRRDLEKALSLIPGKHRVNLHAIYAETNREAVERDELKPQHFENWVKWAKNLGLGLDFNPTLFSHEKAADGLTLSHPDPDIREFWIRHCIACRRIGEYFGKELGTPCLTNIWIPDGYKDIPSDRLTPRKRLKESLDRIFSEEISEQHNLDSIESKLFGLGSESYVVGSHEFYLAYALTNHKLCLLDTGHFHPTETVSNKISSMLLYTDKLALHVSRPVRWDSDHVVVLDDELREIALEIVRNHALEKVAIGLDFFDASINRVAAWTIGTRNMIKALLYALLLPNGYLKQLQEEGRYTERLALMEEFKTYPFGAIWDSYCEQMGVPVKEAWLYDIKEYEQQVLLKRKASSPIV</sequence>
<reference key="1">
    <citation type="journal article" date="1997" name="Microbiology">
        <title>Analysis of the Bacillus subtilis genome: cloning and nucleotide sequence of a 62 kb region between 275 degrees (rrnB) and 284 degrees (pai).</title>
        <authorList>
            <person name="Oudega B."/>
            <person name="Koningstein G."/>
            <person name="Rodrigues L."/>
            <person name="de Sales Ramon M."/>
            <person name="Hilbert H."/>
            <person name="Duesterhoeft A."/>
            <person name="Pohl T.M."/>
            <person name="Weitzenegger T."/>
        </authorList>
    </citation>
    <scope>NUCLEOTIDE SEQUENCE [GENOMIC DNA]</scope>
    <source>
        <strain>168</strain>
    </source>
</reference>
<reference key="2">
    <citation type="journal article" date="1997" name="Nature">
        <title>The complete genome sequence of the Gram-positive bacterium Bacillus subtilis.</title>
        <authorList>
            <person name="Kunst F."/>
            <person name="Ogasawara N."/>
            <person name="Moszer I."/>
            <person name="Albertini A.M."/>
            <person name="Alloni G."/>
            <person name="Azevedo V."/>
            <person name="Bertero M.G."/>
            <person name="Bessieres P."/>
            <person name="Bolotin A."/>
            <person name="Borchert S."/>
            <person name="Borriss R."/>
            <person name="Boursier L."/>
            <person name="Brans A."/>
            <person name="Braun M."/>
            <person name="Brignell S.C."/>
            <person name="Bron S."/>
            <person name="Brouillet S."/>
            <person name="Bruschi C.V."/>
            <person name="Caldwell B."/>
            <person name="Capuano V."/>
            <person name="Carter N.M."/>
            <person name="Choi S.-K."/>
            <person name="Codani J.-J."/>
            <person name="Connerton I.F."/>
            <person name="Cummings N.J."/>
            <person name="Daniel R.A."/>
            <person name="Denizot F."/>
            <person name="Devine K.M."/>
            <person name="Duesterhoeft A."/>
            <person name="Ehrlich S.D."/>
            <person name="Emmerson P.T."/>
            <person name="Entian K.-D."/>
            <person name="Errington J."/>
            <person name="Fabret C."/>
            <person name="Ferrari E."/>
            <person name="Foulger D."/>
            <person name="Fritz C."/>
            <person name="Fujita M."/>
            <person name="Fujita Y."/>
            <person name="Fuma S."/>
            <person name="Galizzi A."/>
            <person name="Galleron N."/>
            <person name="Ghim S.-Y."/>
            <person name="Glaser P."/>
            <person name="Goffeau A."/>
            <person name="Golightly E.J."/>
            <person name="Grandi G."/>
            <person name="Guiseppi G."/>
            <person name="Guy B.J."/>
            <person name="Haga K."/>
            <person name="Haiech J."/>
            <person name="Harwood C.R."/>
            <person name="Henaut A."/>
            <person name="Hilbert H."/>
            <person name="Holsappel S."/>
            <person name="Hosono S."/>
            <person name="Hullo M.-F."/>
            <person name="Itaya M."/>
            <person name="Jones L.-M."/>
            <person name="Joris B."/>
            <person name="Karamata D."/>
            <person name="Kasahara Y."/>
            <person name="Klaerr-Blanchard M."/>
            <person name="Klein C."/>
            <person name="Kobayashi Y."/>
            <person name="Koetter P."/>
            <person name="Koningstein G."/>
            <person name="Krogh S."/>
            <person name="Kumano M."/>
            <person name="Kurita K."/>
            <person name="Lapidus A."/>
            <person name="Lardinois S."/>
            <person name="Lauber J."/>
            <person name="Lazarevic V."/>
            <person name="Lee S.-M."/>
            <person name="Levine A."/>
            <person name="Liu H."/>
            <person name="Masuda S."/>
            <person name="Mauel C."/>
            <person name="Medigue C."/>
            <person name="Medina N."/>
            <person name="Mellado R.P."/>
            <person name="Mizuno M."/>
            <person name="Moestl D."/>
            <person name="Nakai S."/>
            <person name="Noback M."/>
            <person name="Noone D."/>
            <person name="O'Reilly M."/>
            <person name="Ogawa K."/>
            <person name="Ogiwara A."/>
            <person name="Oudega B."/>
            <person name="Park S.-H."/>
            <person name="Parro V."/>
            <person name="Pohl T.M."/>
            <person name="Portetelle D."/>
            <person name="Porwollik S."/>
            <person name="Prescott A.M."/>
            <person name="Presecan E."/>
            <person name="Pujic P."/>
            <person name="Purnelle B."/>
            <person name="Rapoport G."/>
            <person name="Rey M."/>
            <person name="Reynolds S."/>
            <person name="Rieger M."/>
            <person name="Rivolta C."/>
            <person name="Rocha E."/>
            <person name="Roche B."/>
            <person name="Rose M."/>
            <person name="Sadaie Y."/>
            <person name="Sato T."/>
            <person name="Scanlan E."/>
            <person name="Schleich S."/>
            <person name="Schroeter R."/>
            <person name="Scoffone F."/>
            <person name="Sekiguchi J."/>
            <person name="Sekowska A."/>
            <person name="Seror S.J."/>
            <person name="Serror P."/>
            <person name="Shin B.-S."/>
            <person name="Soldo B."/>
            <person name="Sorokin A."/>
            <person name="Tacconi E."/>
            <person name="Takagi T."/>
            <person name="Takahashi H."/>
            <person name="Takemaru K."/>
            <person name="Takeuchi M."/>
            <person name="Tamakoshi A."/>
            <person name="Tanaka T."/>
            <person name="Terpstra P."/>
            <person name="Tognoni A."/>
            <person name="Tosato V."/>
            <person name="Uchiyama S."/>
            <person name="Vandenbol M."/>
            <person name="Vannier F."/>
            <person name="Vassarotti A."/>
            <person name="Viari A."/>
            <person name="Wambutt R."/>
            <person name="Wedler E."/>
            <person name="Wedler H."/>
            <person name="Weitzenegger T."/>
            <person name="Winters P."/>
            <person name="Wipat A."/>
            <person name="Yamamoto H."/>
            <person name="Yamane K."/>
            <person name="Yasumoto K."/>
            <person name="Yata K."/>
            <person name="Yoshida K."/>
            <person name="Yoshikawa H.-F."/>
            <person name="Zumstein E."/>
            <person name="Yoshikawa H."/>
            <person name="Danchin A."/>
        </authorList>
    </citation>
    <scope>NUCLEOTIDE SEQUENCE [LARGE SCALE GENOMIC DNA]</scope>
    <source>
        <strain>168</strain>
    </source>
</reference>
<comment type="function">
    <text evidence="1">Catalyzes the interconversion of L-rhamnose and L-rhamnulose.</text>
</comment>
<comment type="catalytic activity">
    <reaction evidence="1">
        <text>L-rhamnopyranose = L-rhamnulose</text>
        <dbReference type="Rhea" id="RHEA:23160"/>
        <dbReference type="ChEBI" id="CHEBI:17897"/>
        <dbReference type="ChEBI" id="CHEBI:62346"/>
        <dbReference type="EC" id="5.3.1.14"/>
    </reaction>
</comment>
<comment type="cofactor">
    <cofactor evidence="1">
        <name>Mn(2+)</name>
        <dbReference type="ChEBI" id="CHEBI:29035"/>
    </cofactor>
    <text evidence="1">Binds 1 Mn(2+) ion per subunit.</text>
</comment>
<comment type="pathway">
    <text evidence="1">Carbohydrate degradation; L-rhamnose degradation; glycerone phosphate from L-rhamnose: step 1/3.</text>
</comment>
<comment type="subcellular location">
    <subcellularLocation>
        <location evidence="1">Cytoplasm</location>
    </subcellularLocation>
</comment>
<comment type="similarity">
    <text evidence="1">Belongs to the rhamnose isomerase family.</text>
</comment>
<feature type="chain" id="PRO_0000090550" description="L-rhamnose isomerase">
    <location>
        <begin position="1"/>
        <end position="424"/>
    </location>
</feature>
<feature type="binding site" evidence="1">
    <location>
        <position position="261"/>
    </location>
    <ligand>
        <name>Mn(2+)</name>
        <dbReference type="ChEBI" id="CHEBI:29035"/>
    </ligand>
</feature>
<feature type="binding site" evidence="1">
    <location>
        <position position="293"/>
    </location>
    <ligand>
        <name>Mn(2+)</name>
        <dbReference type="ChEBI" id="CHEBI:29035"/>
    </ligand>
</feature>
<feature type="binding site" evidence="1">
    <location>
        <position position="295"/>
    </location>
    <ligand>
        <name>Mn(2+)</name>
        <dbReference type="ChEBI" id="CHEBI:29035"/>
    </ligand>
</feature>
<dbReference type="EC" id="5.3.1.14" evidence="1"/>
<dbReference type="EMBL" id="Z93938">
    <property type="protein sequence ID" value="CAB07951.1"/>
    <property type="molecule type" value="Genomic_DNA"/>
</dbReference>
<dbReference type="EMBL" id="AL009126">
    <property type="protein sequence ID" value="CAB15096.1"/>
    <property type="molecule type" value="Genomic_DNA"/>
</dbReference>
<dbReference type="PIR" id="G70014">
    <property type="entry name" value="G70014"/>
</dbReference>
<dbReference type="RefSeq" id="NP_390996.1">
    <property type="nucleotide sequence ID" value="NC_000964.3"/>
</dbReference>
<dbReference type="RefSeq" id="WP_003244294.1">
    <property type="nucleotide sequence ID" value="NZ_OZ025638.1"/>
</dbReference>
<dbReference type="SMR" id="O05264"/>
<dbReference type="FunCoup" id="O05264">
    <property type="interactions" value="140"/>
</dbReference>
<dbReference type="STRING" id="224308.BSU31180"/>
<dbReference type="PaxDb" id="224308-BSU31180"/>
<dbReference type="EnsemblBacteria" id="CAB15096">
    <property type="protein sequence ID" value="CAB15096"/>
    <property type="gene ID" value="BSU_31180"/>
</dbReference>
<dbReference type="GeneID" id="938836"/>
<dbReference type="KEGG" id="bsu:BSU31180"/>
<dbReference type="PATRIC" id="fig|224308.179.peg.3378"/>
<dbReference type="eggNOG" id="COG4806">
    <property type="taxonomic scope" value="Bacteria"/>
</dbReference>
<dbReference type="InParanoid" id="O05264"/>
<dbReference type="OrthoDB" id="9766697at2"/>
<dbReference type="PhylomeDB" id="O05264"/>
<dbReference type="BioCyc" id="BSUB:BSU31180-MONOMER"/>
<dbReference type="BRENDA" id="5.3.1.14">
    <property type="organism ID" value="658"/>
</dbReference>
<dbReference type="UniPathway" id="UPA00541">
    <property type="reaction ID" value="UER00601"/>
</dbReference>
<dbReference type="Proteomes" id="UP000001570">
    <property type="component" value="Chromosome"/>
</dbReference>
<dbReference type="GO" id="GO:0005737">
    <property type="term" value="C:cytoplasm"/>
    <property type="evidence" value="ECO:0007669"/>
    <property type="project" value="UniProtKB-SubCell"/>
</dbReference>
<dbReference type="GO" id="GO:0008740">
    <property type="term" value="F:L-rhamnose isomerase activity"/>
    <property type="evidence" value="ECO:0000318"/>
    <property type="project" value="GO_Central"/>
</dbReference>
<dbReference type="GO" id="GO:0030145">
    <property type="term" value="F:manganese ion binding"/>
    <property type="evidence" value="ECO:0007669"/>
    <property type="project" value="UniProtKB-UniRule"/>
</dbReference>
<dbReference type="GO" id="GO:0019324">
    <property type="term" value="P:L-lyxose metabolic process"/>
    <property type="evidence" value="ECO:0000318"/>
    <property type="project" value="GO_Central"/>
</dbReference>
<dbReference type="GO" id="GO:0019301">
    <property type="term" value="P:rhamnose catabolic process"/>
    <property type="evidence" value="ECO:0000318"/>
    <property type="project" value="GO_Central"/>
</dbReference>
<dbReference type="FunFam" id="3.20.20.150:FF:000006">
    <property type="entry name" value="L-rhamnose isomerase"/>
    <property type="match status" value="1"/>
</dbReference>
<dbReference type="Gene3D" id="3.20.20.150">
    <property type="entry name" value="Divalent-metal-dependent TIM barrel enzymes"/>
    <property type="match status" value="1"/>
</dbReference>
<dbReference type="HAMAP" id="MF_00541">
    <property type="entry name" value="RhaA"/>
    <property type="match status" value="1"/>
</dbReference>
<dbReference type="InterPro" id="IPR050337">
    <property type="entry name" value="L-rhamnose_isomerase"/>
</dbReference>
<dbReference type="InterPro" id="IPR009308">
    <property type="entry name" value="Rhamnose_isomerase"/>
</dbReference>
<dbReference type="InterPro" id="IPR036237">
    <property type="entry name" value="Xyl_isomerase-like_sf"/>
</dbReference>
<dbReference type="NCBIfam" id="NF002203">
    <property type="entry name" value="PRK01076.1"/>
    <property type="match status" value="1"/>
</dbReference>
<dbReference type="NCBIfam" id="TIGR01748">
    <property type="entry name" value="rhaA"/>
    <property type="match status" value="1"/>
</dbReference>
<dbReference type="PANTHER" id="PTHR30268">
    <property type="entry name" value="L-RHAMNOSE ISOMERASE"/>
    <property type="match status" value="1"/>
</dbReference>
<dbReference type="PANTHER" id="PTHR30268:SF0">
    <property type="entry name" value="L-RHAMNOSE ISOMERASE"/>
    <property type="match status" value="1"/>
</dbReference>
<dbReference type="Pfam" id="PF06134">
    <property type="entry name" value="RhaA"/>
    <property type="match status" value="1"/>
</dbReference>
<dbReference type="SUPFAM" id="SSF51658">
    <property type="entry name" value="Xylose isomerase-like"/>
    <property type="match status" value="1"/>
</dbReference>
<accession>O05264</accession>